<keyword id="KW-0687">Ribonucleoprotein</keyword>
<keyword id="KW-0689">Ribosomal protein</keyword>
<keyword id="KW-0694">RNA-binding</keyword>
<keyword id="KW-0699">rRNA-binding</keyword>
<name>RS11_ACIB3</name>
<accession>B7GW25</accession>
<reference key="1">
    <citation type="journal article" date="2008" name="J. Bacteriol.">
        <title>Comparative genome sequence analysis of multidrug-resistant Acinetobacter baumannii.</title>
        <authorList>
            <person name="Adams M.D."/>
            <person name="Goglin K."/>
            <person name="Molyneaux N."/>
            <person name="Hujer K.M."/>
            <person name="Lavender H."/>
            <person name="Jamison J.J."/>
            <person name="MacDonald I.J."/>
            <person name="Martin K.M."/>
            <person name="Russo T."/>
            <person name="Campagnari A.A."/>
            <person name="Hujer A.M."/>
            <person name="Bonomo R.A."/>
            <person name="Gill S.R."/>
        </authorList>
    </citation>
    <scope>NUCLEOTIDE SEQUENCE [LARGE SCALE GENOMIC DNA]</scope>
    <source>
        <strain>AB307-0294</strain>
    </source>
</reference>
<dbReference type="EMBL" id="CP001172">
    <property type="protein sequence ID" value="ACJ56678.1"/>
    <property type="molecule type" value="Genomic_DNA"/>
</dbReference>
<dbReference type="RefSeq" id="WP_001040166.1">
    <property type="nucleotide sequence ID" value="NZ_CP001172.1"/>
</dbReference>
<dbReference type="SMR" id="B7GW25"/>
<dbReference type="GeneID" id="97425222"/>
<dbReference type="HOGENOM" id="CLU_072439_5_0_6"/>
<dbReference type="Proteomes" id="UP000006924">
    <property type="component" value="Chromosome"/>
</dbReference>
<dbReference type="GO" id="GO:1990904">
    <property type="term" value="C:ribonucleoprotein complex"/>
    <property type="evidence" value="ECO:0007669"/>
    <property type="project" value="UniProtKB-KW"/>
</dbReference>
<dbReference type="GO" id="GO:0005840">
    <property type="term" value="C:ribosome"/>
    <property type="evidence" value="ECO:0007669"/>
    <property type="project" value="UniProtKB-KW"/>
</dbReference>
<dbReference type="GO" id="GO:0019843">
    <property type="term" value="F:rRNA binding"/>
    <property type="evidence" value="ECO:0007669"/>
    <property type="project" value="UniProtKB-UniRule"/>
</dbReference>
<dbReference type="GO" id="GO:0003735">
    <property type="term" value="F:structural constituent of ribosome"/>
    <property type="evidence" value="ECO:0007669"/>
    <property type="project" value="InterPro"/>
</dbReference>
<dbReference type="GO" id="GO:0006412">
    <property type="term" value="P:translation"/>
    <property type="evidence" value="ECO:0007669"/>
    <property type="project" value="UniProtKB-UniRule"/>
</dbReference>
<dbReference type="FunFam" id="3.30.420.80:FF:000001">
    <property type="entry name" value="30S ribosomal protein S11"/>
    <property type="match status" value="1"/>
</dbReference>
<dbReference type="Gene3D" id="3.30.420.80">
    <property type="entry name" value="Ribosomal protein S11"/>
    <property type="match status" value="1"/>
</dbReference>
<dbReference type="HAMAP" id="MF_01310">
    <property type="entry name" value="Ribosomal_uS11"/>
    <property type="match status" value="1"/>
</dbReference>
<dbReference type="InterPro" id="IPR001971">
    <property type="entry name" value="Ribosomal_uS11"/>
</dbReference>
<dbReference type="InterPro" id="IPR019981">
    <property type="entry name" value="Ribosomal_uS11_bac-type"/>
</dbReference>
<dbReference type="InterPro" id="IPR018102">
    <property type="entry name" value="Ribosomal_uS11_CS"/>
</dbReference>
<dbReference type="InterPro" id="IPR036967">
    <property type="entry name" value="Ribosomal_uS11_sf"/>
</dbReference>
<dbReference type="NCBIfam" id="NF003698">
    <property type="entry name" value="PRK05309.1"/>
    <property type="match status" value="1"/>
</dbReference>
<dbReference type="NCBIfam" id="TIGR03632">
    <property type="entry name" value="uS11_bact"/>
    <property type="match status" value="1"/>
</dbReference>
<dbReference type="PANTHER" id="PTHR11759">
    <property type="entry name" value="40S RIBOSOMAL PROTEIN S14/30S RIBOSOMAL PROTEIN S11"/>
    <property type="match status" value="1"/>
</dbReference>
<dbReference type="Pfam" id="PF00411">
    <property type="entry name" value="Ribosomal_S11"/>
    <property type="match status" value="1"/>
</dbReference>
<dbReference type="PIRSF" id="PIRSF002131">
    <property type="entry name" value="Ribosomal_S11"/>
    <property type="match status" value="1"/>
</dbReference>
<dbReference type="SUPFAM" id="SSF53137">
    <property type="entry name" value="Translational machinery components"/>
    <property type="match status" value="1"/>
</dbReference>
<dbReference type="PROSITE" id="PS00054">
    <property type="entry name" value="RIBOSOMAL_S11"/>
    <property type="match status" value="1"/>
</dbReference>
<gene>
    <name evidence="1" type="primary">rpsK</name>
    <name type="ordered locus">ABBFA_000455</name>
</gene>
<feature type="chain" id="PRO_1000141040" description="Small ribosomal subunit protein uS11">
    <location>
        <begin position="1"/>
        <end position="128"/>
    </location>
</feature>
<protein>
    <recommendedName>
        <fullName evidence="1">Small ribosomal subunit protein uS11</fullName>
    </recommendedName>
    <alternativeName>
        <fullName evidence="2">30S ribosomal protein S11</fullName>
    </alternativeName>
</protein>
<organism>
    <name type="scientific">Acinetobacter baumannii (strain AB307-0294)</name>
    <dbReference type="NCBI Taxonomy" id="557600"/>
    <lineage>
        <taxon>Bacteria</taxon>
        <taxon>Pseudomonadati</taxon>
        <taxon>Pseudomonadota</taxon>
        <taxon>Gammaproteobacteria</taxon>
        <taxon>Moraxellales</taxon>
        <taxon>Moraxellaceae</taxon>
        <taxon>Acinetobacter</taxon>
        <taxon>Acinetobacter calcoaceticus/baumannii complex</taxon>
    </lineage>
</organism>
<evidence type="ECO:0000255" key="1">
    <source>
        <dbReference type="HAMAP-Rule" id="MF_01310"/>
    </source>
</evidence>
<evidence type="ECO:0000305" key="2"/>
<sequence>MAKDTRTRKKVTRTVSEGVAHIHASFNNTIVTITDRQGNALAWATSGGQGFRGSRKSTPFAAQVAAEVAGKAALDYGLKNLDVLVKGPGPGRESAVRALGAVGYKINSITDVTPIPHNGCRPPKKRRV</sequence>
<proteinExistence type="inferred from homology"/>
<comment type="function">
    <text evidence="1">Located on the platform of the 30S subunit, it bridges several disparate RNA helices of the 16S rRNA. Forms part of the Shine-Dalgarno cleft in the 70S ribosome.</text>
</comment>
<comment type="subunit">
    <text evidence="1">Part of the 30S ribosomal subunit. Interacts with proteins S7 and S18. Binds to IF-3.</text>
</comment>
<comment type="similarity">
    <text evidence="1">Belongs to the universal ribosomal protein uS11 family.</text>
</comment>